<reference evidence="9" key="1">
    <citation type="journal article" date="1998" name="DNA Res.">
        <title>Prediction of the coding sequences of unidentified human genes. XII. The complete sequences of 100 new cDNA clones from brain which code for large proteins in vitro.</title>
        <authorList>
            <person name="Nagase T."/>
            <person name="Ishikawa K."/>
            <person name="Suyama M."/>
            <person name="Kikuno R."/>
            <person name="Hirosawa M."/>
            <person name="Miyajima N."/>
            <person name="Tanaka A."/>
            <person name="Kotani H."/>
            <person name="Nomura N."/>
            <person name="Ohara O."/>
        </authorList>
    </citation>
    <scope>NUCLEOTIDE SEQUENCE [LARGE SCALE MRNA] (ISOFORM 2)</scope>
    <source>
        <tissue evidence="6">Brain</tissue>
    </source>
</reference>
<reference key="2">
    <citation type="journal article" date="2007" name="BMC Genomics">
        <title>The full-ORF clone resource of the German cDNA consortium.</title>
        <authorList>
            <person name="Bechtel S."/>
            <person name="Rosenfelder H."/>
            <person name="Duda A."/>
            <person name="Schmidt C.P."/>
            <person name="Ernst U."/>
            <person name="Wellenreuther R."/>
            <person name="Mehrle A."/>
            <person name="Schuster C."/>
            <person name="Bahr A."/>
            <person name="Bloecker H."/>
            <person name="Heubner D."/>
            <person name="Hoerlein A."/>
            <person name="Michel G."/>
            <person name="Wedler H."/>
            <person name="Koehrer K."/>
            <person name="Ottenwaelder B."/>
            <person name="Poustka A."/>
            <person name="Wiemann S."/>
            <person name="Schupp I."/>
        </authorList>
    </citation>
    <scope>NUCLEOTIDE SEQUENCE [LARGE SCALE MRNA] (ISOFORM 1)</scope>
    <source>
        <tissue>Endometrium</tissue>
    </source>
</reference>
<reference key="3">
    <citation type="journal article" date="2005" name="Nature">
        <title>Generation and annotation of the DNA sequences of human chromosomes 2 and 4.</title>
        <authorList>
            <person name="Hillier L.W."/>
            <person name="Graves T.A."/>
            <person name="Fulton R.S."/>
            <person name="Fulton L.A."/>
            <person name="Pepin K.H."/>
            <person name="Minx P."/>
            <person name="Wagner-McPherson C."/>
            <person name="Layman D."/>
            <person name="Wylie K."/>
            <person name="Sekhon M."/>
            <person name="Becker M.C."/>
            <person name="Fewell G.A."/>
            <person name="Delehaunty K.D."/>
            <person name="Miner T.L."/>
            <person name="Nash W.E."/>
            <person name="Kremitzki C."/>
            <person name="Oddy L."/>
            <person name="Du H."/>
            <person name="Sun H."/>
            <person name="Bradshaw-Cordum H."/>
            <person name="Ali J."/>
            <person name="Carter J."/>
            <person name="Cordes M."/>
            <person name="Harris A."/>
            <person name="Isak A."/>
            <person name="van Brunt A."/>
            <person name="Nguyen C."/>
            <person name="Du F."/>
            <person name="Courtney L."/>
            <person name="Kalicki J."/>
            <person name="Ozersky P."/>
            <person name="Abbott S."/>
            <person name="Armstrong J."/>
            <person name="Belter E.A."/>
            <person name="Caruso L."/>
            <person name="Cedroni M."/>
            <person name="Cotton M."/>
            <person name="Davidson T."/>
            <person name="Desai A."/>
            <person name="Elliott G."/>
            <person name="Erb T."/>
            <person name="Fronick C."/>
            <person name="Gaige T."/>
            <person name="Haakenson W."/>
            <person name="Haglund K."/>
            <person name="Holmes A."/>
            <person name="Harkins R."/>
            <person name="Kim K."/>
            <person name="Kruchowski S.S."/>
            <person name="Strong C.M."/>
            <person name="Grewal N."/>
            <person name="Goyea E."/>
            <person name="Hou S."/>
            <person name="Levy A."/>
            <person name="Martinka S."/>
            <person name="Mead K."/>
            <person name="McLellan M.D."/>
            <person name="Meyer R."/>
            <person name="Randall-Maher J."/>
            <person name="Tomlinson C."/>
            <person name="Dauphin-Kohlberg S."/>
            <person name="Kozlowicz-Reilly A."/>
            <person name="Shah N."/>
            <person name="Swearengen-Shahid S."/>
            <person name="Snider J."/>
            <person name="Strong J.T."/>
            <person name="Thompson J."/>
            <person name="Yoakum M."/>
            <person name="Leonard S."/>
            <person name="Pearman C."/>
            <person name="Trani L."/>
            <person name="Radionenko M."/>
            <person name="Waligorski J.E."/>
            <person name="Wang C."/>
            <person name="Rock S.M."/>
            <person name="Tin-Wollam A.-M."/>
            <person name="Maupin R."/>
            <person name="Latreille P."/>
            <person name="Wendl M.C."/>
            <person name="Yang S.-P."/>
            <person name="Pohl C."/>
            <person name="Wallis J.W."/>
            <person name="Spieth J."/>
            <person name="Bieri T.A."/>
            <person name="Berkowicz N."/>
            <person name="Nelson J.O."/>
            <person name="Osborne J."/>
            <person name="Ding L."/>
            <person name="Meyer R."/>
            <person name="Sabo A."/>
            <person name="Shotland Y."/>
            <person name="Sinha P."/>
            <person name="Wohldmann P.E."/>
            <person name="Cook L.L."/>
            <person name="Hickenbotham M.T."/>
            <person name="Eldred J."/>
            <person name="Williams D."/>
            <person name="Jones T.A."/>
            <person name="She X."/>
            <person name="Ciccarelli F.D."/>
            <person name="Izaurralde E."/>
            <person name="Taylor J."/>
            <person name="Schmutz J."/>
            <person name="Myers R.M."/>
            <person name="Cox D.R."/>
            <person name="Huang X."/>
            <person name="McPherson J.D."/>
            <person name="Mardis E.R."/>
            <person name="Clifton S.W."/>
            <person name="Warren W.C."/>
            <person name="Chinwalla A.T."/>
            <person name="Eddy S.R."/>
            <person name="Marra M.A."/>
            <person name="Ovcharenko I."/>
            <person name="Furey T.S."/>
            <person name="Miller W."/>
            <person name="Eichler E.E."/>
            <person name="Bork P."/>
            <person name="Suyama M."/>
            <person name="Torrents D."/>
            <person name="Waterston R.H."/>
            <person name="Wilson R.K."/>
        </authorList>
    </citation>
    <scope>NUCLEOTIDE SEQUENCE [LARGE SCALE GENOMIC DNA]</scope>
</reference>
<reference key="4">
    <citation type="submission" date="2005-09" db="EMBL/GenBank/DDBJ databases">
        <authorList>
            <person name="Mural R.J."/>
            <person name="Istrail S."/>
            <person name="Sutton G."/>
            <person name="Florea L."/>
            <person name="Halpern A.L."/>
            <person name="Mobarry C.M."/>
            <person name="Lippert R."/>
            <person name="Walenz B."/>
            <person name="Shatkay H."/>
            <person name="Dew I."/>
            <person name="Miller J.R."/>
            <person name="Flanigan M.J."/>
            <person name="Edwards N.J."/>
            <person name="Bolanos R."/>
            <person name="Fasulo D."/>
            <person name="Halldorsson B.V."/>
            <person name="Hannenhalli S."/>
            <person name="Turner R."/>
            <person name="Yooseph S."/>
            <person name="Lu F."/>
            <person name="Nusskern D.R."/>
            <person name="Shue B.C."/>
            <person name="Zheng X.H."/>
            <person name="Zhong F."/>
            <person name="Delcher A.L."/>
            <person name="Huson D.H."/>
            <person name="Kravitz S.A."/>
            <person name="Mouchard L."/>
            <person name="Reinert K."/>
            <person name="Remington K.A."/>
            <person name="Clark A.G."/>
            <person name="Waterman M.S."/>
            <person name="Eichler E.E."/>
            <person name="Adams M.D."/>
            <person name="Hunkapiller M.W."/>
            <person name="Myers E.W."/>
            <person name="Venter J.C."/>
        </authorList>
    </citation>
    <scope>NUCLEOTIDE SEQUENCE [LARGE SCALE GENOMIC DNA]</scope>
</reference>
<reference evidence="9" key="5">
    <citation type="journal article" date="2004" name="Genome Res.">
        <title>The status, quality, and expansion of the NIH full-length cDNA project: the Mammalian Gene Collection (MGC).</title>
        <authorList>
            <consortium name="The MGC Project Team"/>
        </authorList>
    </citation>
    <scope>NUCLEOTIDE SEQUENCE [LARGE SCALE MRNA] (ISOFORM 1)</scope>
</reference>
<reference evidence="9" key="6">
    <citation type="journal article" date="2000" name="J. Biol. Chem.">
        <title>Identification of guanine nucleotide exchange factors (GEFs) for the Rap1 GTPase. Regulation of MR-GEF by M-Ras-GTP interaction.</title>
        <authorList>
            <person name="Rebhun J.F."/>
            <person name="Castro A.F."/>
            <person name="Quilliam L.A."/>
        </authorList>
    </citation>
    <scope>FUNCTION</scope>
</reference>
<organism evidence="10">
    <name type="scientific">Homo sapiens</name>
    <name type="common">Human</name>
    <dbReference type="NCBI Taxonomy" id="9606"/>
    <lineage>
        <taxon>Eukaryota</taxon>
        <taxon>Metazoa</taxon>
        <taxon>Chordata</taxon>
        <taxon>Craniata</taxon>
        <taxon>Vertebrata</taxon>
        <taxon>Euteleostomi</taxon>
        <taxon>Mammalia</taxon>
        <taxon>Eutheria</taxon>
        <taxon>Euarchontoglires</taxon>
        <taxon>Primates</taxon>
        <taxon>Haplorrhini</taxon>
        <taxon>Catarrhini</taxon>
        <taxon>Hominidae</taxon>
        <taxon>Homo</taxon>
    </lineage>
</organism>
<gene>
    <name type="primary">RASGRP3</name>
    <name type="synonym">GRP3</name>
    <name type="synonym">KIAA0846</name>
</gene>
<protein>
    <recommendedName>
        <fullName>Ras guanyl-releasing protein 3</fullName>
    </recommendedName>
    <alternativeName>
        <fullName>Calcium and DAG-regulated guanine nucleotide exchange factor III</fullName>
    </alternativeName>
    <alternativeName>
        <fullName>Guanine nucleotide exchange factor for Rap1</fullName>
    </alternativeName>
</protein>
<sequence length="690" mass="78332">MGSSGLGKAATLDELLCTCIEMFDDNGELDNSYLPRIVLLMHRWYLSSTELAEKLLCMYRNATGESCNEFRLKICYFMRYWILKFPAEFNLDLGLIRMTEEFREVASQLGYEKHVSLIDISSIPSYDWMRRVTQRKKVSKKGKACLLFDHLEPIELAEHLTFLEHKSFRRISFTDYQSYVIHGCLENNPTLERSIALFNGISKWVQLMVLSKPTPQQRAEVITKFINVAKKLLQLKNFNTLMAVVGGLSHSSISRLKETHSHLSSEVTKNWNEMTELVSSNGNYCNYRKAFADCDGFKIPILGVHLKDLIAVHVIFPDWTEENKVNIVKMHQLSVTLSELVSLQNASHHLEPNMDLINLLTLSLDLYHTEDDIYKLSLVLEPRNSKSQPTSPTTPNKPVVPLEWALGVMPKPDPTVINKHIRKLVESVFRNYDHDHDGYISQEDFESIAANFPFLDSFCVLDKDQDGLISKDEMMAYFLRAKSQLHCKMGPGFIHNFQEMTYLKPTFCEHCAGFLWGIIKQGYKCKDCGANCHKQCKDLLVLACRRFARAPSLSSGHGSLPGSPSLPPAQDEVFEFPGVTAGHRDLDSRAITLVTGSSRKISVRLQRATTSQATQTEPVWSEAGWGDSGSHTFPKMKSKFHDKAAKDKGFAKWENEKPRVHAGVDVVDRGTEFELDQDEGEETRQDGEDG</sequence>
<dbReference type="EMBL" id="AB020653">
    <property type="protein sequence ID" value="BAA74869.2"/>
    <property type="status" value="ALT_INIT"/>
    <property type="molecule type" value="mRNA"/>
</dbReference>
<dbReference type="EMBL" id="BX647990">
    <property type="status" value="NOT_ANNOTATED_CDS"/>
    <property type="molecule type" value="mRNA"/>
</dbReference>
<dbReference type="EMBL" id="AC020594">
    <property type="protein sequence ID" value="AAY15037.1"/>
    <property type="molecule type" value="Genomic_DNA"/>
</dbReference>
<dbReference type="EMBL" id="CH471053">
    <property type="protein sequence ID" value="EAX00432.1"/>
    <property type="molecule type" value="Genomic_DNA"/>
</dbReference>
<dbReference type="EMBL" id="CH471053">
    <property type="protein sequence ID" value="EAX00433.1"/>
    <property type="molecule type" value="Genomic_DNA"/>
</dbReference>
<dbReference type="EMBL" id="CH471053">
    <property type="protein sequence ID" value="EAX00434.1"/>
    <property type="molecule type" value="Genomic_DNA"/>
</dbReference>
<dbReference type="EMBL" id="BC027849">
    <property type="protein sequence ID" value="AAH27849.1"/>
    <property type="molecule type" value="mRNA"/>
</dbReference>
<dbReference type="CCDS" id="CCDS46256.1">
    <molecule id="Q8IV61-1"/>
</dbReference>
<dbReference type="CCDS" id="CCDS54346.1">
    <molecule id="Q8IV61-2"/>
</dbReference>
<dbReference type="RefSeq" id="NP_001132960.1">
    <molecule id="Q8IV61-1"/>
    <property type="nucleotide sequence ID" value="NM_001139488.2"/>
</dbReference>
<dbReference type="RefSeq" id="NP_001336904.1">
    <molecule id="Q8IV61-1"/>
    <property type="nucleotide sequence ID" value="NM_001349975.2"/>
</dbReference>
<dbReference type="RefSeq" id="NP_001336905.1">
    <molecule id="Q8IV61-1"/>
    <property type="nucleotide sequence ID" value="NM_001349976.2"/>
</dbReference>
<dbReference type="RefSeq" id="NP_001336906.1">
    <molecule id="Q8IV61-1"/>
    <property type="nucleotide sequence ID" value="NM_001349977.2"/>
</dbReference>
<dbReference type="RefSeq" id="NP_001336907.1">
    <molecule id="Q8IV61-2"/>
    <property type="nucleotide sequence ID" value="NM_001349978.2"/>
</dbReference>
<dbReference type="RefSeq" id="NP_001336908.1">
    <molecule id="Q8IV61-2"/>
    <property type="nucleotide sequence ID" value="NM_001349979.2"/>
</dbReference>
<dbReference type="RefSeq" id="NP_001336909.1">
    <molecule id="Q8IV61-2"/>
    <property type="nucleotide sequence ID" value="NM_001349980.2"/>
</dbReference>
<dbReference type="RefSeq" id="NP_001336910.1">
    <molecule id="Q8IV61-2"/>
    <property type="nucleotide sequence ID" value="NM_001349981.2"/>
</dbReference>
<dbReference type="RefSeq" id="NP_056191.1">
    <molecule id="Q8IV61-2"/>
    <property type="nucleotide sequence ID" value="NM_015376.3"/>
</dbReference>
<dbReference type="RefSeq" id="NP_733772.1">
    <molecule id="Q8IV61-1"/>
    <property type="nucleotide sequence ID" value="NM_170672.3"/>
</dbReference>
<dbReference type="RefSeq" id="XP_005264303.1">
    <property type="nucleotide sequence ID" value="XM_005264246.3"/>
</dbReference>
<dbReference type="RefSeq" id="XP_011531048.1">
    <molecule id="Q8IV61-1"/>
    <property type="nucleotide sequence ID" value="XM_011532746.4"/>
</dbReference>
<dbReference type="RefSeq" id="XP_011531049.1">
    <property type="nucleotide sequence ID" value="XM_011532747.2"/>
</dbReference>
<dbReference type="RefSeq" id="XP_011531050.2">
    <molecule id="Q8IV61-1"/>
    <property type="nucleotide sequence ID" value="XM_011532748.4"/>
</dbReference>
<dbReference type="RefSeq" id="XP_016859248.1">
    <property type="nucleotide sequence ID" value="XM_017003759.1"/>
</dbReference>
<dbReference type="RefSeq" id="XP_016859249.1">
    <property type="nucleotide sequence ID" value="XM_017003760.1"/>
</dbReference>
<dbReference type="RefSeq" id="XP_016859250.1">
    <molecule id="Q8IV61-1"/>
    <property type="nucleotide sequence ID" value="XM_017003761.3"/>
</dbReference>
<dbReference type="RefSeq" id="XP_016859251.1">
    <property type="nucleotide sequence ID" value="XM_017003762.1"/>
</dbReference>
<dbReference type="RefSeq" id="XP_016859252.1">
    <property type="nucleotide sequence ID" value="XM_017003763.1"/>
</dbReference>
<dbReference type="RefSeq" id="XP_047299833.1">
    <molecule id="Q8IV61-1"/>
    <property type="nucleotide sequence ID" value="XM_047443877.1"/>
</dbReference>
<dbReference type="RefSeq" id="XP_047299834.1">
    <molecule id="Q8IV61-2"/>
    <property type="nucleotide sequence ID" value="XM_047443878.1"/>
</dbReference>
<dbReference type="RefSeq" id="XP_047299835.1">
    <molecule id="Q8IV61-2"/>
    <property type="nucleotide sequence ID" value="XM_047443879.1"/>
</dbReference>
<dbReference type="RefSeq" id="XP_054197270.1">
    <molecule id="Q8IV61-1"/>
    <property type="nucleotide sequence ID" value="XM_054341295.1"/>
</dbReference>
<dbReference type="RefSeq" id="XP_054197271.1">
    <molecule id="Q8IV61-1"/>
    <property type="nucleotide sequence ID" value="XM_054341296.1"/>
</dbReference>
<dbReference type="RefSeq" id="XP_054197272.1">
    <molecule id="Q8IV61-1"/>
    <property type="nucleotide sequence ID" value="XM_054341297.1"/>
</dbReference>
<dbReference type="RefSeq" id="XP_054197273.1">
    <molecule id="Q8IV61-1"/>
    <property type="nucleotide sequence ID" value="XM_054341298.1"/>
</dbReference>
<dbReference type="RefSeq" id="XP_054197274.1">
    <molecule id="Q8IV61-2"/>
    <property type="nucleotide sequence ID" value="XM_054341299.1"/>
</dbReference>
<dbReference type="RefSeq" id="XP_054197275.1">
    <molecule id="Q8IV61-2"/>
    <property type="nucleotide sequence ID" value="XM_054341300.1"/>
</dbReference>
<dbReference type="SMR" id="Q8IV61"/>
<dbReference type="BioGRID" id="117315">
    <property type="interactions" value="19"/>
</dbReference>
<dbReference type="FunCoup" id="Q8IV61">
    <property type="interactions" value="1202"/>
</dbReference>
<dbReference type="IntAct" id="Q8IV61">
    <property type="interactions" value="6"/>
</dbReference>
<dbReference type="STRING" id="9606.ENSP00000385886"/>
<dbReference type="BindingDB" id="Q8IV61"/>
<dbReference type="ChEMBL" id="CHEMBL3638"/>
<dbReference type="iPTMnet" id="Q8IV61"/>
<dbReference type="PhosphoSitePlus" id="Q8IV61"/>
<dbReference type="BioMuta" id="RASGRP3"/>
<dbReference type="DMDM" id="34395670"/>
<dbReference type="jPOST" id="Q8IV61"/>
<dbReference type="MassIVE" id="Q8IV61"/>
<dbReference type="PaxDb" id="9606-ENSP00000384192"/>
<dbReference type="PeptideAtlas" id="Q8IV61"/>
<dbReference type="ProteomicsDB" id="15160"/>
<dbReference type="ProteomicsDB" id="70665">
    <molecule id="Q8IV61-1"/>
</dbReference>
<dbReference type="Antibodypedia" id="29256">
    <property type="antibodies" value="320 antibodies from 26 providers"/>
</dbReference>
<dbReference type="DNASU" id="25780"/>
<dbReference type="Ensembl" id="ENST00000402538.8">
    <molecule id="Q8IV61-1"/>
    <property type="protein sequence ID" value="ENSP00000385886.3"/>
    <property type="gene ID" value="ENSG00000152689.19"/>
</dbReference>
<dbReference type="Ensembl" id="ENST00000403687.8">
    <molecule id="Q8IV61-1"/>
    <property type="protein sequence ID" value="ENSP00000384192.3"/>
    <property type="gene ID" value="ENSG00000152689.19"/>
</dbReference>
<dbReference type="Ensembl" id="ENST00000407811.5">
    <molecule id="Q8IV61-2"/>
    <property type="protein sequence ID" value="ENSP00000383917.1"/>
    <property type="gene ID" value="ENSG00000152689.19"/>
</dbReference>
<dbReference type="GeneID" id="25780"/>
<dbReference type="KEGG" id="hsa:25780"/>
<dbReference type="MANE-Select" id="ENST00000403687.8">
    <property type="protein sequence ID" value="ENSP00000384192.3"/>
    <property type="RefSeq nucleotide sequence ID" value="NM_001139488.2"/>
    <property type="RefSeq protein sequence ID" value="NP_001132960.1"/>
</dbReference>
<dbReference type="UCSC" id="uc002rox.4">
    <molecule id="Q8IV61-1"/>
    <property type="organism name" value="human"/>
</dbReference>
<dbReference type="AGR" id="HGNC:14545"/>
<dbReference type="CTD" id="25780"/>
<dbReference type="DisGeNET" id="25780"/>
<dbReference type="GeneCards" id="RASGRP3"/>
<dbReference type="HGNC" id="HGNC:14545">
    <property type="gene designation" value="RASGRP3"/>
</dbReference>
<dbReference type="HPA" id="ENSG00000152689">
    <property type="expression patterns" value="Tissue enhanced (brain, skeletal muscle)"/>
</dbReference>
<dbReference type="MIM" id="609531">
    <property type="type" value="gene"/>
</dbReference>
<dbReference type="neXtProt" id="NX_Q8IV61"/>
<dbReference type="OpenTargets" id="ENSG00000152689"/>
<dbReference type="PharmGKB" id="PA134937092"/>
<dbReference type="VEuPathDB" id="HostDB:ENSG00000152689"/>
<dbReference type="eggNOG" id="KOG3417">
    <property type="taxonomic scope" value="Eukaryota"/>
</dbReference>
<dbReference type="GeneTree" id="ENSGT00940000158843"/>
<dbReference type="InParanoid" id="Q8IV61"/>
<dbReference type="OMA" id="QNRVTHR"/>
<dbReference type="OrthoDB" id="546434at2759"/>
<dbReference type="PAN-GO" id="Q8IV61">
    <property type="GO annotations" value="4 GO annotations based on evolutionary models"/>
</dbReference>
<dbReference type="PhylomeDB" id="Q8IV61"/>
<dbReference type="TreeFam" id="TF312918"/>
<dbReference type="PathwayCommons" id="Q8IV61"/>
<dbReference type="Reactome" id="R-HSA-1169092">
    <property type="pathway name" value="Activation of RAS in B cells"/>
</dbReference>
<dbReference type="Reactome" id="R-HSA-5673001">
    <property type="pathway name" value="RAF/MAP kinase cascade"/>
</dbReference>
<dbReference type="SignaLink" id="Q8IV61"/>
<dbReference type="SIGNOR" id="Q8IV61"/>
<dbReference type="BioGRID-ORCS" id="25780">
    <property type="hits" value="15 hits in 1157 CRISPR screens"/>
</dbReference>
<dbReference type="ChiTaRS" id="RASGRP3">
    <property type="organism name" value="human"/>
</dbReference>
<dbReference type="GeneWiki" id="RASGRP3"/>
<dbReference type="GenomeRNAi" id="25780"/>
<dbReference type="Pharos" id="Q8IV61">
    <property type="development level" value="Tchem"/>
</dbReference>
<dbReference type="PRO" id="PR:Q8IV61"/>
<dbReference type="Proteomes" id="UP000005640">
    <property type="component" value="Chromosome 2"/>
</dbReference>
<dbReference type="RNAct" id="Q8IV61">
    <property type="molecule type" value="protein"/>
</dbReference>
<dbReference type="Bgee" id="ENSG00000152689">
    <property type="expression patterns" value="Expressed in corpus callosum and 174 other cell types or tissues"/>
</dbReference>
<dbReference type="ExpressionAtlas" id="Q8IV61">
    <property type="expression patterns" value="baseline and differential"/>
</dbReference>
<dbReference type="GO" id="GO:0032045">
    <property type="term" value="C:guanyl-nucleotide exchange factor complex"/>
    <property type="evidence" value="ECO:0007669"/>
    <property type="project" value="Ensembl"/>
</dbReference>
<dbReference type="GO" id="GO:0048471">
    <property type="term" value="C:perinuclear region of cytoplasm"/>
    <property type="evidence" value="ECO:0007669"/>
    <property type="project" value="Ensembl"/>
</dbReference>
<dbReference type="GO" id="GO:0005886">
    <property type="term" value="C:plasma membrane"/>
    <property type="evidence" value="ECO:0000318"/>
    <property type="project" value="GO_Central"/>
</dbReference>
<dbReference type="GO" id="GO:0005509">
    <property type="term" value="F:calcium ion binding"/>
    <property type="evidence" value="ECO:0000303"/>
    <property type="project" value="UniProtKB"/>
</dbReference>
<dbReference type="GO" id="GO:0019992">
    <property type="term" value="F:diacylglycerol binding"/>
    <property type="evidence" value="ECO:0000303"/>
    <property type="project" value="UniProtKB"/>
</dbReference>
<dbReference type="GO" id="GO:0005096">
    <property type="term" value="F:GTPase activator activity"/>
    <property type="evidence" value="ECO:0000314"/>
    <property type="project" value="UniProtKB"/>
</dbReference>
<dbReference type="GO" id="GO:0005085">
    <property type="term" value="F:guanyl-nucleotide exchange factor activity"/>
    <property type="evidence" value="ECO:0000318"/>
    <property type="project" value="GO_Central"/>
</dbReference>
<dbReference type="GO" id="GO:0019900">
    <property type="term" value="F:kinase binding"/>
    <property type="evidence" value="ECO:0007669"/>
    <property type="project" value="Ensembl"/>
</dbReference>
<dbReference type="GO" id="GO:0031267">
    <property type="term" value="F:small GTPase binding"/>
    <property type="evidence" value="ECO:0007669"/>
    <property type="project" value="Ensembl"/>
</dbReference>
<dbReference type="GO" id="GO:0008270">
    <property type="term" value="F:zinc ion binding"/>
    <property type="evidence" value="ECO:0007669"/>
    <property type="project" value="UniProtKB-KW"/>
</dbReference>
<dbReference type="GO" id="GO:0000165">
    <property type="term" value="P:MAPK cascade"/>
    <property type="evidence" value="ECO:0000303"/>
    <property type="project" value="UniProtKB"/>
</dbReference>
<dbReference type="GO" id="GO:0007265">
    <property type="term" value="P:Ras protein signal transduction"/>
    <property type="evidence" value="ECO:0000318"/>
    <property type="project" value="GO_Central"/>
</dbReference>
<dbReference type="GO" id="GO:0007264">
    <property type="term" value="P:small GTPase-mediated signal transduction"/>
    <property type="evidence" value="ECO:0000304"/>
    <property type="project" value="UniProtKB"/>
</dbReference>
<dbReference type="CDD" id="cd20862">
    <property type="entry name" value="C1_RASGRP3"/>
    <property type="match status" value="1"/>
</dbReference>
<dbReference type="CDD" id="cd00051">
    <property type="entry name" value="EFh"/>
    <property type="match status" value="1"/>
</dbReference>
<dbReference type="CDD" id="cd00155">
    <property type="entry name" value="RasGEF"/>
    <property type="match status" value="1"/>
</dbReference>
<dbReference type="CDD" id="cd06224">
    <property type="entry name" value="REM"/>
    <property type="match status" value="1"/>
</dbReference>
<dbReference type="FunFam" id="3.30.60.20:FF:000023">
    <property type="entry name" value="RAS guanyl-releasing protein 1 isoform X1"/>
    <property type="match status" value="1"/>
</dbReference>
<dbReference type="FunFam" id="1.10.238.10:FF:000051">
    <property type="entry name" value="Ras guanyl-releasing protein 3 isoform 1"/>
    <property type="match status" value="1"/>
</dbReference>
<dbReference type="FunFam" id="1.10.840.10:FF:000003">
    <property type="entry name" value="Ras guanyl-releasing protein 3 isoform 1"/>
    <property type="match status" value="1"/>
</dbReference>
<dbReference type="FunFam" id="1.20.870.10:FF:000010">
    <property type="entry name" value="ras guanyl-releasing protein 3 isoform X2"/>
    <property type="match status" value="1"/>
</dbReference>
<dbReference type="Gene3D" id="3.30.60.20">
    <property type="match status" value="1"/>
</dbReference>
<dbReference type="Gene3D" id="1.10.238.10">
    <property type="entry name" value="EF-hand"/>
    <property type="match status" value="1"/>
</dbReference>
<dbReference type="Gene3D" id="1.10.840.10">
    <property type="entry name" value="Ras guanine-nucleotide exchange factors catalytic domain"/>
    <property type="match status" value="1"/>
</dbReference>
<dbReference type="Gene3D" id="1.20.870.10">
    <property type="entry name" value="Son of sevenless (SoS) protein Chain: S domain 1"/>
    <property type="match status" value="1"/>
</dbReference>
<dbReference type="InterPro" id="IPR046349">
    <property type="entry name" value="C1-like_sf"/>
</dbReference>
<dbReference type="InterPro" id="IPR020454">
    <property type="entry name" value="DAG/PE-bd"/>
</dbReference>
<dbReference type="InterPro" id="IPR011992">
    <property type="entry name" value="EF-hand-dom_pair"/>
</dbReference>
<dbReference type="InterPro" id="IPR018247">
    <property type="entry name" value="EF_Hand_1_Ca_BS"/>
</dbReference>
<dbReference type="InterPro" id="IPR002048">
    <property type="entry name" value="EF_hand_dom"/>
</dbReference>
<dbReference type="InterPro" id="IPR002219">
    <property type="entry name" value="PE/DAG-bd"/>
</dbReference>
<dbReference type="InterPro" id="IPR008937">
    <property type="entry name" value="Ras-like_GEF"/>
</dbReference>
<dbReference type="InterPro" id="IPR000651">
    <property type="entry name" value="Ras-like_Gua-exchang_fac_N"/>
</dbReference>
<dbReference type="InterPro" id="IPR023578">
    <property type="entry name" value="Ras_GEF_dom_sf"/>
</dbReference>
<dbReference type="InterPro" id="IPR001895">
    <property type="entry name" value="RASGEF_cat_dom"/>
</dbReference>
<dbReference type="InterPro" id="IPR036964">
    <property type="entry name" value="RASGEF_cat_dom_sf"/>
</dbReference>
<dbReference type="PANTHER" id="PTHR23113">
    <property type="entry name" value="GUANINE NUCLEOTIDE EXCHANGE FACTOR"/>
    <property type="match status" value="1"/>
</dbReference>
<dbReference type="PANTHER" id="PTHR23113:SF178">
    <property type="entry name" value="RAS GUANYL-RELEASING PROTEIN 3"/>
    <property type="match status" value="1"/>
</dbReference>
<dbReference type="Pfam" id="PF00130">
    <property type="entry name" value="C1_1"/>
    <property type="match status" value="1"/>
</dbReference>
<dbReference type="Pfam" id="PF13499">
    <property type="entry name" value="EF-hand_7"/>
    <property type="match status" value="1"/>
</dbReference>
<dbReference type="Pfam" id="PF00617">
    <property type="entry name" value="RasGEF"/>
    <property type="match status" value="1"/>
</dbReference>
<dbReference type="PRINTS" id="PR00008">
    <property type="entry name" value="DAGPEDOMAIN"/>
</dbReference>
<dbReference type="SMART" id="SM00109">
    <property type="entry name" value="C1"/>
    <property type="match status" value="1"/>
</dbReference>
<dbReference type="SMART" id="SM00054">
    <property type="entry name" value="EFh"/>
    <property type="match status" value="2"/>
</dbReference>
<dbReference type="SMART" id="SM00147">
    <property type="entry name" value="RasGEF"/>
    <property type="match status" value="1"/>
</dbReference>
<dbReference type="SMART" id="SM00229">
    <property type="entry name" value="RasGEFN"/>
    <property type="match status" value="1"/>
</dbReference>
<dbReference type="SUPFAM" id="SSF57889">
    <property type="entry name" value="Cysteine-rich domain"/>
    <property type="match status" value="1"/>
</dbReference>
<dbReference type="SUPFAM" id="SSF47473">
    <property type="entry name" value="EF-hand"/>
    <property type="match status" value="1"/>
</dbReference>
<dbReference type="SUPFAM" id="SSF48366">
    <property type="entry name" value="Ras GEF"/>
    <property type="match status" value="1"/>
</dbReference>
<dbReference type="PROSITE" id="PS00018">
    <property type="entry name" value="EF_HAND_1"/>
    <property type="match status" value="2"/>
</dbReference>
<dbReference type="PROSITE" id="PS50222">
    <property type="entry name" value="EF_HAND_2"/>
    <property type="match status" value="2"/>
</dbReference>
<dbReference type="PROSITE" id="PS50009">
    <property type="entry name" value="RASGEF_CAT"/>
    <property type="match status" value="1"/>
</dbReference>
<dbReference type="PROSITE" id="PS50212">
    <property type="entry name" value="RASGEF_NTER"/>
    <property type="match status" value="1"/>
</dbReference>
<dbReference type="PROSITE" id="PS00479">
    <property type="entry name" value="ZF_DAG_PE_1"/>
    <property type="match status" value="1"/>
</dbReference>
<dbReference type="PROSITE" id="PS50081">
    <property type="entry name" value="ZF_DAG_PE_2"/>
    <property type="match status" value="1"/>
</dbReference>
<accession>Q8IV61</accession>
<accession>D6W583</accession>
<accession>O94931</accession>
<accession>Q53SD7</accession>
<feature type="chain" id="PRO_0000068883" description="Ras guanyl-releasing protein 3">
    <location>
        <begin position="1"/>
        <end position="690"/>
    </location>
</feature>
<feature type="domain" description="N-terminal Ras-GEF" evidence="1">
    <location>
        <begin position="3"/>
        <end position="125"/>
    </location>
</feature>
<feature type="domain" description="Ras-GEF" evidence="2">
    <location>
        <begin position="152"/>
        <end position="383"/>
    </location>
</feature>
<feature type="domain" description="EF-hand 1" evidence="4">
    <location>
        <begin position="420"/>
        <end position="455"/>
    </location>
</feature>
<feature type="domain" description="EF-hand 2" evidence="4">
    <location>
        <begin position="458"/>
        <end position="484"/>
    </location>
</feature>
<feature type="zinc finger region" description="Phorbol-ester/DAG-type" evidence="3">
    <location>
        <begin position="494"/>
        <end position="544"/>
    </location>
</feature>
<feature type="region of interest" description="Disordered" evidence="5">
    <location>
        <begin position="667"/>
        <end position="690"/>
    </location>
</feature>
<feature type="binding site" evidence="4">
    <location>
        <position position="433"/>
    </location>
    <ligand>
        <name>Ca(2+)</name>
        <dbReference type="ChEBI" id="CHEBI:29108"/>
        <label>1</label>
    </ligand>
</feature>
<feature type="binding site" evidence="4">
    <location>
        <position position="435"/>
    </location>
    <ligand>
        <name>Ca(2+)</name>
        <dbReference type="ChEBI" id="CHEBI:29108"/>
        <label>1</label>
    </ligand>
</feature>
<feature type="binding site" evidence="4">
    <location>
        <position position="437"/>
    </location>
    <ligand>
        <name>Ca(2+)</name>
        <dbReference type="ChEBI" id="CHEBI:29108"/>
        <label>1</label>
    </ligand>
</feature>
<feature type="binding site" evidence="4">
    <location>
        <position position="439"/>
    </location>
    <ligand>
        <name>Ca(2+)</name>
        <dbReference type="ChEBI" id="CHEBI:29108"/>
        <label>1</label>
    </ligand>
</feature>
<feature type="binding site" evidence="4">
    <location>
        <position position="444"/>
    </location>
    <ligand>
        <name>Ca(2+)</name>
        <dbReference type="ChEBI" id="CHEBI:29108"/>
        <label>1</label>
    </ligand>
</feature>
<feature type="binding site" evidence="4">
    <location>
        <position position="462"/>
    </location>
    <ligand>
        <name>Ca(2+)</name>
        <dbReference type="ChEBI" id="CHEBI:29108"/>
        <label>2</label>
    </ligand>
</feature>
<feature type="binding site" evidence="4">
    <location>
        <position position="464"/>
    </location>
    <ligand>
        <name>Ca(2+)</name>
        <dbReference type="ChEBI" id="CHEBI:29108"/>
        <label>2</label>
    </ligand>
</feature>
<feature type="binding site" evidence="4">
    <location>
        <position position="466"/>
    </location>
    <ligand>
        <name>Ca(2+)</name>
        <dbReference type="ChEBI" id="CHEBI:29108"/>
        <label>2</label>
    </ligand>
</feature>
<feature type="binding site" evidence="4">
    <location>
        <position position="473"/>
    </location>
    <ligand>
        <name>Ca(2+)</name>
        <dbReference type="ChEBI" id="CHEBI:29108"/>
        <label>2</label>
    </ligand>
</feature>
<feature type="splice variant" id="VSP_047371" description="In isoform 2." evidence="8">
    <location>
        <position position="388"/>
    </location>
</feature>
<feature type="sequence variant" id="VAR_051901" description="In dbSNP:rs13388394.">
    <original>T</original>
    <variation>A</variation>
    <location>
        <position position="393"/>
    </location>
</feature>
<evidence type="ECO:0000255" key="1">
    <source>
        <dbReference type="PROSITE-ProRule" id="PRU00135"/>
    </source>
</evidence>
<evidence type="ECO:0000255" key="2">
    <source>
        <dbReference type="PROSITE-ProRule" id="PRU00168"/>
    </source>
</evidence>
<evidence type="ECO:0000255" key="3">
    <source>
        <dbReference type="PROSITE-ProRule" id="PRU00226"/>
    </source>
</evidence>
<evidence type="ECO:0000255" key="4">
    <source>
        <dbReference type="PROSITE-ProRule" id="PRU00448"/>
    </source>
</evidence>
<evidence type="ECO:0000256" key="5">
    <source>
        <dbReference type="SAM" id="MobiDB-lite"/>
    </source>
</evidence>
<evidence type="ECO:0000269" key="6">
    <source>
    </source>
</evidence>
<evidence type="ECO:0000269" key="7">
    <source>
    </source>
</evidence>
<evidence type="ECO:0000303" key="8">
    <source>
    </source>
</evidence>
<evidence type="ECO:0000305" key="9"/>
<evidence type="ECO:0000312" key="10">
    <source>
        <dbReference type="EMBL" id="AAH27849.1"/>
    </source>
</evidence>
<keyword id="KW-0025">Alternative splicing</keyword>
<keyword id="KW-0106">Calcium</keyword>
<keyword id="KW-0344">Guanine-nucleotide releasing factor</keyword>
<keyword id="KW-0479">Metal-binding</keyword>
<keyword id="KW-1267">Proteomics identification</keyword>
<keyword id="KW-1185">Reference proteome</keyword>
<keyword id="KW-0677">Repeat</keyword>
<keyword id="KW-0862">Zinc</keyword>
<keyword id="KW-0863">Zinc-finger</keyword>
<comment type="function">
    <text evidence="7">Guanine nucleotide exchange factor (GEF) for Ras and Rap1.</text>
</comment>
<comment type="interaction">
    <interactant intactId="EBI-1047876">
        <id>Q8IV61</id>
    </interactant>
    <interactant intactId="EBI-742371">
        <id>Q96FJ2</id>
        <label>DYNLL2</label>
    </interactant>
    <organismsDiffer>false</organismsDiffer>
    <experiments>3</experiments>
</comment>
<comment type="interaction">
    <interactant intactId="EBI-1047876">
        <id>Q8IV61</id>
    </interactant>
    <interactant intactId="EBI-18908258">
        <id>O00258</id>
        <label>GET1</label>
    </interactant>
    <organismsDiffer>false</organismsDiffer>
    <experiments>3</experiments>
</comment>
<comment type="interaction">
    <interactant intactId="EBI-1047876">
        <id>Q8IV61</id>
    </interactant>
    <interactant intactId="EBI-1052304">
        <id>Q8NBQ5</id>
        <label>HSD17B11</label>
    </interactant>
    <organismsDiffer>false</organismsDiffer>
    <experiments>3</experiments>
</comment>
<comment type="alternative products">
    <event type="alternative splicing"/>
    <isoform>
        <id>Q8IV61-1</id>
        <name>1</name>
        <sequence type="displayed"/>
    </isoform>
    <isoform>
        <id>Q8IV61-2</id>
        <name>2</name>
        <sequence type="described" ref="VSP_047371"/>
    </isoform>
</comment>
<comment type="similarity">
    <text evidence="9">Belongs to the RASGRP family.</text>
</comment>
<comment type="sequence caution" evidence="9">
    <conflict type="erroneous initiation">
        <sequence resource="EMBL-CDS" id="BAA74869"/>
    </conflict>
    <text>Extended N-terminus.</text>
</comment>
<name>GRP3_HUMAN</name>
<proteinExistence type="evidence at protein level"/>